<evidence type="ECO:0000255" key="1">
    <source>
        <dbReference type="HAMAP-Rule" id="MF_01382"/>
    </source>
</evidence>
<evidence type="ECO:0000256" key="2">
    <source>
        <dbReference type="SAM" id="MobiDB-lite"/>
    </source>
</evidence>
<accession>Q8CPZ2</accession>
<name>SECA1_STAES</name>
<dbReference type="EC" id="7.4.2.8" evidence="1"/>
<dbReference type="EMBL" id="AE015929">
    <property type="protein sequence ID" value="AAO04132.1"/>
    <property type="molecule type" value="Genomic_DNA"/>
</dbReference>
<dbReference type="RefSeq" id="NP_764090.1">
    <property type="nucleotide sequence ID" value="NC_004461.1"/>
</dbReference>
<dbReference type="SMR" id="Q8CPZ2"/>
<dbReference type="KEGG" id="sep:SE_0535"/>
<dbReference type="PATRIC" id="fig|176280.10.peg.507"/>
<dbReference type="eggNOG" id="COG0653">
    <property type="taxonomic scope" value="Bacteria"/>
</dbReference>
<dbReference type="HOGENOM" id="CLU_005314_3_0_9"/>
<dbReference type="OrthoDB" id="9805579at2"/>
<dbReference type="Proteomes" id="UP000001411">
    <property type="component" value="Chromosome"/>
</dbReference>
<dbReference type="GO" id="GO:0031522">
    <property type="term" value="C:cell envelope Sec protein transport complex"/>
    <property type="evidence" value="ECO:0007669"/>
    <property type="project" value="TreeGrafter"/>
</dbReference>
<dbReference type="GO" id="GO:0005829">
    <property type="term" value="C:cytosol"/>
    <property type="evidence" value="ECO:0007669"/>
    <property type="project" value="TreeGrafter"/>
</dbReference>
<dbReference type="GO" id="GO:0005886">
    <property type="term" value="C:plasma membrane"/>
    <property type="evidence" value="ECO:0007669"/>
    <property type="project" value="UniProtKB-SubCell"/>
</dbReference>
<dbReference type="GO" id="GO:0005524">
    <property type="term" value="F:ATP binding"/>
    <property type="evidence" value="ECO:0007669"/>
    <property type="project" value="UniProtKB-UniRule"/>
</dbReference>
<dbReference type="GO" id="GO:0046872">
    <property type="term" value="F:metal ion binding"/>
    <property type="evidence" value="ECO:0007669"/>
    <property type="project" value="UniProtKB-KW"/>
</dbReference>
<dbReference type="GO" id="GO:0008564">
    <property type="term" value="F:protein-exporting ATPase activity"/>
    <property type="evidence" value="ECO:0007669"/>
    <property type="project" value="UniProtKB-EC"/>
</dbReference>
<dbReference type="GO" id="GO:0065002">
    <property type="term" value="P:intracellular protein transmembrane transport"/>
    <property type="evidence" value="ECO:0007669"/>
    <property type="project" value="UniProtKB-UniRule"/>
</dbReference>
<dbReference type="GO" id="GO:0017038">
    <property type="term" value="P:protein import"/>
    <property type="evidence" value="ECO:0007669"/>
    <property type="project" value="InterPro"/>
</dbReference>
<dbReference type="GO" id="GO:0006605">
    <property type="term" value="P:protein targeting"/>
    <property type="evidence" value="ECO:0007669"/>
    <property type="project" value="UniProtKB-UniRule"/>
</dbReference>
<dbReference type="GO" id="GO:0043952">
    <property type="term" value="P:protein transport by the Sec complex"/>
    <property type="evidence" value="ECO:0007669"/>
    <property type="project" value="TreeGrafter"/>
</dbReference>
<dbReference type="CDD" id="cd17928">
    <property type="entry name" value="DEXDc_SecA"/>
    <property type="match status" value="1"/>
</dbReference>
<dbReference type="CDD" id="cd18803">
    <property type="entry name" value="SF2_C_secA"/>
    <property type="match status" value="1"/>
</dbReference>
<dbReference type="FunFam" id="3.40.50.300:FF:000694">
    <property type="entry name" value="Preprotein translocase subunit SecA"/>
    <property type="match status" value="1"/>
</dbReference>
<dbReference type="FunFam" id="3.90.1440.10:FF:000002">
    <property type="entry name" value="Protein translocase subunit SecA"/>
    <property type="match status" value="1"/>
</dbReference>
<dbReference type="Gene3D" id="1.10.3060.10">
    <property type="entry name" value="Helical scaffold and wing domains of SecA"/>
    <property type="match status" value="1"/>
</dbReference>
<dbReference type="Gene3D" id="3.40.50.300">
    <property type="entry name" value="P-loop containing nucleotide triphosphate hydrolases"/>
    <property type="match status" value="2"/>
</dbReference>
<dbReference type="Gene3D" id="3.90.1440.10">
    <property type="entry name" value="SecA, preprotein cross-linking domain"/>
    <property type="match status" value="1"/>
</dbReference>
<dbReference type="HAMAP" id="MF_01382">
    <property type="entry name" value="SecA"/>
    <property type="match status" value="1"/>
</dbReference>
<dbReference type="InterPro" id="IPR014001">
    <property type="entry name" value="Helicase_ATP-bd"/>
</dbReference>
<dbReference type="InterPro" id="IPR001650">
    <property type="entry name" value="Helicase_C-like"/>
</dbReference>
<dbReference type="InterPro" id="IPR027417">
    <property type="entry name" value="P-loop_NTPase"/>
</dbReference>
<dbReference type="InterPro" id="IPR004027">
    <property type="entry name" value="SEC_C_motif"/>
</dbReference>
<dbReference type="InterPro" id="IPR000185">
    <property type="entry name" value="SecA"/>
</dbReference>
<dbReference type="InterPro" id="IPR020937">
    <property type="entry name" value="SecA_CS"/>
</dbReference>
<dbReference type="InterPro" id="IPR011115">
    <property type="entry name" value="SecA_DEAD"/>
</dbReference>
<dbReference type="InterPro" id="IPR014018">
    <property type="entry name" value="SecA_motor_DEAD"/>
</dbReference>
<dbReference type="InterPro" id="IPR011130">
    <property type="entry name" value="SecA_preprotein_X-link_dom"/>
</dbReference>
<dbReference type="InterPro" id="IPR044722">
    <property type="entry name" value="SecA_SF2_C"/>
</dbReference>
<dbReference type="InterPro" id="IPR011116">
    <property type="entry name" value="SecA_Wing/Scaffold"/>
</dbReference>
<dbReference type="InterPro" id="IPR036266">
    <property type="entry name" value="SecA_Wing/Scaffold_sf"/>
</dbReference>
<dbReference type="InterPro" id="IPR036670">
    <property type="entry name" value="SecA_X-link_sf"/>
</dbReference>
<dbReference type="NCBIfam" id="NF006630">
    <property type="entry name" value="PRK09200.1"/>
    <property type="match status" value="1"/>
</dbReference>
<dbReference type="NCBIfam" id="TIGR00963">
    <property type="entry name" value="secA"/>
    <property type="match status" value="1"/>
</dbReference>
<dbReference type="PANTHER" id="PTHR30612:SF0">
    <property type="entry name" value="CHLOROPLAST PROTEIN-TRANSPORTING ATPASE"/>
    <property type="match status" value="1"/>
</dbReference>
<dbReference type="PANTHER" id="PTHR30612">
    <property type="entry name" value="SECA INNER MEMBRANE COMPONENT OF SEC PROTEIN SECRETION SYSTEM"/>
    <property type="match status" value="1"/>
</dbReference>
<dbReference type="Pfam" id="PF21090">
    <property type="entry name" value="P-loop_SecA"/>
    <property type="match status" value="1"/>
</dbReference>
<dbReference type="Pfam" id="PF02810">
    <property type="entry name" value="SEC-C"/>
    <property type="match status" value="1"/>
</dbReference>
<dbReference type="Pfam" id="PF07517">
    <property type="entry name" value="SecA_DEAD"/>
    <property type="match status" value="1"/>
</dbReference>
<dbReference type="Pfam" id="PF01043">
    <property type="entry name" value="SecA_PP_bind"/>
    <property type="match status" value="1"/>
</dbReference>
<dbReference type="Pfam" id="PF07516">
    <property type="entry name" value="SecA_SW"/>
    <property type="match status" value="1"/>
</dbReference>
<dbReference type="PRINTS" id="PR00906">
    <property type="entry name" value="SECA"/>
</dbReference>
<dbReference type="SMART" id="SM00957">
    <property type="entry name" value="SecA_DEAD"/>
    <property type="match status" value="1"/>
</dbReference>
<dbReference type="SMART" id="SM00958">
    <property type="entry name" value="SecA_PP_bind"/>
    <property type="match status" value="1"/>
</dbReference>
<dbReference type="SUPFAM" id="SSF81886">
    <property type="entry name" value="Helical scaffold and wing domains of SecA"/>
    <property type="match status" value="1"/>
</dbReference>
<dbReference type="SUPFAM" id="SSF52540">
    <property type="entry name" value="P-loop containing nucleoside triphosphate hydrolases"/>
    <property type="match status" value="2"/>
</dbReference>
<dbReference type="SUPFAM" id="SSF81767">
    <property type="entry name" value="Pre-protein crosslinking domain of SecA"/>
    <property type="match status" value="1"/>
</dbReference>
<dbReference type="PROSITE" id="PS01312">
    <property type="entry name" value="SECA"/>
    <property type="match status" value="1"/>
</dbReference>
<dbReference type="PROSITE" id="PS51196">
    <property type="entry name" value="SECA_MOTOR_DEAD"/>
    <property type="match status" value="1"/>
</dbReference>
<reference key="1">
    <citation type="journal article" date="2003" name="Mol. Microbiol.">
        <title>Genome-based analysis of virulence genes in a non-biofilm-forming Staphylococcus epidermidis strain (ATCC 12228).</title>
        <authorList>
            <person name="Zhang Y.-Q."/>
            <person name="Ren S.-X."/>
            <person name="Li H.-L."/>
            <person name="Wang Y.-X."/>
            <person name="Fu G."/>
            <person name="Yang J."/>
            <person name="Qin Z.-Q."/>
            <person name="Miao Y.-G."/>
            <person name="Wang W.-Y."/>
            <person name="Chen R.-S."/>
            <person name="Shen Y."/>
            <person name="Chen Z."/>
            <person name="Yuan Z.-H."/>
            <person name="Zhao G.-P."/>
            <person name="Qu D."/>
            <person name="Danchin A."/>
            <person name="Wen Y.-M."/>
        </authorList>
    </citation>
    <scope>NUCLEOTIDE SEQUENCE [LARGE SCALE GENOMIC DNA]</scope>
    <source>
        <strain>ATCC 12228 / FDA PCI 1200</strain>
    </source>
</reference>
<comment type="function">
    <text evidence="1">Part of the Sec protein translocase complex. Interacts with the SecYEG preprotein conducting channel. Has a central role in coupling the hydrolysis of ATP to the transfer of proteins into and across the cell membrane, serving as an ATP-driven molecular motor driving the stepwise translocation of polypeptide chains across the membrane.</text>
</comment>
<comment type="catalytic activity">
    <reaction evidence="1">
        <text>ATP + H2O + cellular proteinSide 1 = ADP + phosphate + cellular proteinSide 2.</text>
        <dbReference type="EC" id="7.4.2.8"/>
    </reaction>
</comment>
<comment type="cofactor">
    <cofactor evidence="1">
        <name>Zn(2+)</name>
        <dbReference type="ChEBI" id="CHEBI:29105"/>
    </cofactor>
    <text evidence="1">May bind 1 zinc ion per subunit.</text>
</comment>
<comment type="subunit">
    <text evidence="1">Monomer and homodimer. Part of the essential Sec protein translocation apparatus which comprises SecA, SecYEG and auxiliary proteins SecDF. Other proteins may also be involved.</text>
</comment>
<comment type="subcellular location">
    <subcellularLocation>
        <location evidence="1">Cell membrane</location>
        <topology evidence="1">Peripheral membrane protein</topology>
        <orientation evidence="1">Cytoplasmic side</orientation>
    </subcellularLocation>
    <subcellularLocation>
        <location evidence="1">Cytoplasm</location>
    </subcellularLocation>
    <text evidence="1">Distribution is 50-50.</text>
</comment>
<comment type="similarity">
    <text evidence="1">Belongs to the SecA family.</text>
</comment>
<organism>
    <name type="scientific">Staphylococcus epidermidis (strain ATCC 12228 / FDA PCI 1200)</name>
    <dbReference type="NCBI Taxonomy" id="176280"/>
    <lineage>
        <taxon>Bacteria</taxon>
        <taxon>Bacillati</taxon>
        <taxon>Bacillota</taxon>
        <taxon>Bacilli</taxon>
        <taxon>Bacillales</taxon>
        <taxon>Staphylococcaceae</taxon>
        <taxon>Staphylococcus</taxon>
    </lineage>
</organism>
<feature type="chain" id="PRO_0000109610" description="Protein translocase subunit SecA 1">
    <location>
        <begin position="1"/>
        <end position="844"/>
    </location>
</feature>
<feature type="region of interest" description="Disordered" evidence="2">
    <location>
        <begin position="793"/>
        <end position="825"/>
    </location>
</feature>
<feature type="compositionally biased region" description="Basic and acidic residues" evidence="2">
    <location>
        <begin position="793"/>
        <end position="813"/>
    </location>
</feature>
<feature type="binding site" evidence="1">
    <location>
        <position position="91"/>
    </location>
    <ligand>
        <name>ATP</name>
        <dbReference type="ChEBI" id="CHEBI:30616"/>
    </ligand>
</feature>
<feature type="binding site" evidence="1">
    <location>
        <begin position="109"/>
        <end position="113"/>
    </location>
    <ligand>
        <name>ATP</name>
        <dbReference type="ChEBI" id="CHEBI:30616"/>
    </ligand>
</feature>
<feature type="binding site" evidence="1">
    <location>
        <position position="498"/>
    </location>
    <ligand>
        <name>ATP</name>
        <dbReference type="ChEBI" id="CHEBI:30616"/>
    </ligand>
</feature>
<feature type="binding site" evidence="1">
    <location>
        <position position="829"/>
    </location>
    <ligand>
        <name>Zn(2+)</name>
        <dbReference type="ChEBI" id="CHEBI:29105"/>
    </ligand>
</feature>
<feature type="binding site" evidence="1">
    <location>
        <position position="831"/>
    </location>
    <ligand>
        <name>Zn(2+)</name>
        <dbReference type="ChEBI" id="CHEBI:29105"/>
    </ligand>
</feature>
<feature type="binding site" evidence="1">
    <location>
        <position position="840"/>
    </location>
    <ligand>
        <name>Zn(2+)</name>
        <dbReference type="ChEBI" id="CHEBI:29105"/>
    </ligand>
</feature>
<feature type="binding site" evidence="1">
    <location>
        <position position="841"/>
    </location>
    <ligand>
        <name>Zn(2+)</name>
        <dbReference type="ChEBI" id="CHEBI:29105"/>
    </ligand>
</feature>
<gene>
    <name evidence="1" type="primary">secA1</name>
    <name type="ordered locus">SE_0535</name>
</gene>
<proteinExistence type="inferred from homology"/>
<keyword id="KW-0067">ATP-binding</keyword>
<keyword id="KW-1003">Cell membrane</keyword>
<keyword id="KW-0963">Cytoplasm</keyword>
<keyword id="KW-0472">Membrane</keyword>
<keyword id="KW-0479">Metal-binding</keyword>
<keyword id="KW-0547">Nucleotide-binding</keyword>
<keyword id="KW-0653">Protein transport</keyword>
<keyword id="KW-1278">Translocase</keyword>
<keyword id="KW-0811">Translocation</keyword>
<keyword id="KW-0813">Transport</keyword>
<keyword id="KW-0862">Zinc</keyword>
<protein>
    <recommendedName>
        <fullName evidence="1">Protein translocase subunit SecA 1</fullName>
        <ecNumber evidence="1">7.4.2.8</ecNumber>
    </recommendedName>
</protein>
<sequence>MGFLSKIVDGNKKEIKRLGKLADKVLALEEDTAILTDEEIREKTKSFQKELAEIEDVKKQNDYLDKILPEAYALVREGSKRVFNMIPYKVQVMGGIAIHKGDIAEMRTGEGKTLTATMPTYLNALAGRGVHVITVNEYLSSSQSEEMAELYNYLGLTVGLNLNSKSTEEKREAYAQDITYSTNNELGFDYLRDNMVNYAEERVMRPLHFAIIDEVDSILIDEARTPLIISGEAEKSTSLYTQANVFAKMLKAEDDYNYDEKTKAVHLTEQGADKAERMFKVDNLYDVQNVEVISHINTALRAHVTLQRDVDYMVVDGEVLIVDQFTGRTMPGRRFSEGLHQAIEAKEGVAIQNESKTMASITFQNYFRMYNKLAGMTGTAKTEEEEFRNIYNMTVTQIPTNKPVQRKDNSDLIYISQKGKFDAVVEDVVEKHKKGQPVLLGTVAVETSEYISNLLKKRGVRHDVLNAKNHEREAEIVSNAGQKGAVTIATNMAGRGTDIKLGDGVEELGGLAVIGTERHESRRIDDQLRGRSGRQGDRGDSRFYLSLQDELMVRFGSERLQKMMNRLGMDDSTPIESKMVSRAVESAQKRVEGNNFDARKRILEYDEVLRKQREIIYNERNEIIDSEESSQVVNAMLRSTLQRAINHFINEEDDNPDYTPFINYVNDVFLQEGDLQDTEIKGKDSEDIFEIVWSKIEKAYAQQQETLGDQMSEFERMILLRSIDTHWTDHIDTMDQLRQGIHLRSYAQQNPLRDYQNEGHELFDIMMQNIEEDTCKYILKSVVQFEDDVEREKSKSFGEAKHVTAEDGKEKAKPQPIVKGDQVGRNDPCPCGSGKKYKNCHGKA</sequence>